<organism>
    <name type="scientific">Bacillus subtilis (strain 168)</name>
    <dbReference type="NCBI Taxonomy" id="224308"/>
    <lineage>
        <taxon>Bacteria</taxon>
        <taxon>Bacillati</taxon>
        <taxon>Bacillota</taxon>
        <taxon>Bacilli</taxon>
        <taxon>Bacillales</taxon>
        <taxon>Bacillaceae</taxon>
        <taxon>Bacillus</taxon>
    </lineage>
</organism>
<sequence length="539" mass="62668">MQLTELSIKNQNVFVQHYIDGKEEMSSFFDYSIHHKDMWRERLEDLSSRFFAREELAAYLTSYHNKFGSSAMQSAIEKLKDPSSAAVVGGQQAGLLTGPLYTIHKIISIIVLAKQQEKELQVPVIPIFWVAGEDHDLDEINFVHTSEENGPVKKKLPQSYWKKSSAASTSLDQEKCAAWIDDVFAAFEETDHTNTLLDNVKRCLRESVTFTDFFELLIADLFQEEGLVLLNSGDPGIKKLETAMFQKILRENDELARAVSDQQAFMRQAGYKPIIESGKEQANLFYEYEDERFLIEKDNGRFVIKELDLGWTRDELHTHMEEHPERFSNNVVTRPLMQEFLIPTLAFIAGPGEINYWGELKQAFAVMGFKMPPVMPRLNITILERHIEKKLAERNISLQDAIERGTENQRETYFERQIPEEFTAVMDQAKSQIEAIHKTVRQEALKVDQSLEPLLLKNAAFIQDQLQFLERTVMKRIEEKEGYVLKDYERIQNSIKPLLAPQERIWNIMYYLNRYGPKFFTTFKNLPFSFQNQHQVVKL</sequence>
<protein>
    <recommendedName>
        <fullName evidence="1 5">Putative cysteine ligase BshC</fullName>
        <ecNumber evidence="1 7">6.-.-.-</ecNumber>
    </recommendedName>
</protein>
<feature type="chain" id="PRO_0000049626" description="Putative cysteine ligase BshC">
    <location>
        <begin position="1"/>
        <end position="539"/>
    </location>
</feature>
<feature type="coiled-coil region" evidence="1">
    <location>
        <begin position="455"/>
        <end position="475"/>
    </location>
</feature>
<feature type="binding site" evidence="3 9">
    <location>
        <position position="146"/>
    </location>
    <ligand>
        <name>ADP</name>
        <dbReference type="ChEBI" id="CHEBI:456216"/>
    </ligand>
</feature>
<feature type="binding site" evidence="3 9">
    <location>
        <begin position="384"/>
        <end position="386"/>
    </location>
    <ligand>
        <name>ADP</name>
        <dbReference type="ChEBI" id="CHEBI:456216"/>
    </ligand>
</feature>
<feature type="binding site" evidence="3 9">
    <location>
        <begin position="490"/>
        <end position="493"/>
    </location>
    <ligand>
        <name>ADP</name>
        <dbReference type="ChEBI" id="CHEBI:456216"/>
    </ligand>
</feature>
<feature type="binding site" evidence="3 9">
    <location>
        <position position="506"/>
    </location>
    <ligand>
        <name>ADP</name>
        <dbReference type="ChEBI" id="CHEBI:456216"/>
    </ligand>
</feature>
<feature type="binding site" evidence="3 9">
    <location>
        <position position="510"/>
    </location>
    <ligand>
        <name>ADP</name>
        <dbReference type="ChEBI" id="CHEBI:456216"/>
    </ligand>
</feature>
<feature type="sequence conflict" description="In Ref. 1; CAA92523." evidence="7" ref="1">
    <original>Y</original>
    <variation>S</variation>
    <location>
        <position position="63"/>
    </location>
</feature>
<feature type="sequence conflict" description="In Ref. 1; CAA92523." evidence="7" ref="1">
    <original>S</original>
    <variation>P</variation>
    <location>
        <position position="69"/>
    </location>
</feature>
<feature type="sequence conflict" description="In Ref. 1; CAA92523." evidence="7" ref="1">
    <original>S</original>
    <variation>T</variation>
    <location>
        <position position="74"/>
    </location>
</feature>
<feature type="sequence conflict" description="In Ref. 1; CAA92523." evidence="7" ref="1">
    <original>KLKDPSS</original>
    <variation>TLKTRHV</variation>
    <location>
        <begin position="78"/>
        <end position="84"/>
    </location>
</feature>
<feature type="sequence conflict" description="In Ref. 1; CAA92523." evidence="7" ref="1">
    <original>E</original>
    <variation>A</variation>
    <location>
        <position position="415"/>
    </location>
</feature>
<feature type="strand" evidence="10">
    <location>
        <begin position="2"/>
        <end position="6"/>
    </location>
</feature>
<feature type="helix" evidence="10">
    <location>
        <begin position="13"/>
        <end position="20"/>
    </location>
</feature>
<feature type="helix" evidence="10">
    <location>
        <begin position="23"/>
        <end position="27"/>
    </location>
</feature>
<feature type="helix" evidence="10">
    <location>
        <begin position="38"/>
        <end position="47"/>
    </location>
</feature>
<feature type="helix" evidence="10">
    <location>
        <begin position="53"/>
        <end position="64"/>
    </location>
</feature>
<feature type="helix" evidence="10">
    <location>
        <begin position="65"/>
        <end position="67"/>
    </location>
</feature>
<feature type="helix" evidence="10">
    <location>
        <begin position="70"/>
        <end position="78"/>
    </location>
</feature>
<feature type="strand" evidence="10">
    <location>
        <begin position="85"/>
        <end position="91"/>
    </location>
</feature>
<feature type="helix" evidence="10">
    <location>
        <begin position="95"/>
        <end position="97"/>
    </location>
</feature>
<feature type="helix" evidence="10">
    <location>
        <begin position="100"/>
        <end position="120"/>
    </location>
</feature>
<feature type="strand" evidence="10">
    <location>
        <begin position="124"/>
        <end position="130"/>
    </location>
</feature>
<feature type="helix" evidence="10">
    <location>
        <begin position="137"/>
        <end position="139"/>
    </location>
</feature>
<feature type="strand" evidence="10">
    <location>
        <begin position="141"/>
        <end position="147"/>
    </location>
</feature>
<feature type="strand" evidence="10">
    <location>
        <begin position="150"/>
        <end position="155"/>
    </location>
</feature>
<feature type="turn" evidence="10">
    <location>
        <begin position="166"/>
        <end position="168"/>
    </location>
</feature>
<feature type="helix" evidence="10">
    <location>
        <begin position="173"/>
        <end position="185"/>
    </location>
</feature>
<feature type="helix" evidence="10">
    <location>
        <begin position="193"/>
        <end position="205"/>
    </location>
</feature>
<feature type="helix" evidence="10">
    <location>
        <begin position="210"/>
        <end position="222"/>
    </location>
</feature>
<feature type="helix" evidence="10">
    <location>
        <begin position="223"/>
        <end position="225"/>
    </location>
</feature>
<feature type="strand" evidence="10">
    <location>
        <begin position="228"/>
        <end position="231"/>
    </location>
</feature>
<feature type="helix" evidence="10">
    <location>
        <begin position="235"/>
        <end position="250"/>
    </location>
</feature>
<feature type="helix" evidence="10">
    <location>
        <begin position="252"/>
        <end position="268"/>
    </location>
</feature>
<feature type="strand" evidence="10">
    <location>
        <begin position="281"/>
        <end position="288"/>
    </location>
</feature>
<feature type="strand" evidence="10">
    <location>
        <begin position="291"/>
        <end position="298"/>
    </location>
</feature>
<feature type="strand" evidence="10">
    <location>
        <begin position="301"/>
        <end position="304"/>
    </location>
</feature>
<feature type="helix" evidence="10">
    <location>
        <begin position="305"/>
        <end position="307"/>
    </location>
</feature>
<feature type="strand" evidence="10">
    <location>
        <begin position="309"/>
        <end position="311"/>
    </location>
</feature>
<feature type="helix" evidence="10">
    <location>
        <begin position="313"/>
        <end position="322"/>
    </location>
</feature>
<feature type="helix" evidence="10">
    <location>
        <begin position="324"/>
        <end position="326"/>
    </location>
</feature>
<feature type="strand" evidence="10">
    <location>
        <begin position="327"/>
        <end position="329"/>
    </location>
</feature>
<feature type="turn" evidence="10">
    <location>
        <begin position="331"/>
        <end position="333"/>
    </location>
</feature>
<feature type="helix" evidence="10">
    <location>
        <begin position="334"/>
        <end position="341"/>
    </location>
</feature>
<feature type="strand" evidence="10">
    <location>
        <begin position="344"/>
        <end position="349"/>
    </location>
</feature>
<feature type="helix" evidence="10">
    <location>
        <begin position="351"/>
        <end position="358"/>
    </location>
</feature>
<feature type="helix" evidence="10">
    <location>
        <begin position="361"/>
        <end position="366"/>
    </location>
</feature>
<feature type="strand" evidence="10">
    <location>
        <begin position="374"/>
        <end position="376"/>
    </location>
</feature>
<feature type="strand" evidence="10">
    <location>
        <begin position="380"/>
        <end position="383"/>
    </location>
</feature>
<feature type="helix" evidence="10">
    <location>
        <begin position="385"/>
        <end position="393"/>
    </location>
</feature>
<feature type="helix" evidence="10">
    <location>
        <begin position="398"/>
        <end position="404"/>
    </location>
</feature>
<feature type="helix" evidence="10">
    <location>
        <begin position="407"/>
        <end position="416"/>
    </location>
</feature>
<feature type="helix" evidence="10">
    <location>
        <begin position="420"/>
        <end position="445"/>
    </location>
</feature>
<feature type="helix" evidence="10">
    <location>
        <begin position="449"/>
        <end position="451"/>
    </location>
</feature>
<feature type="helix" evidence="10">
    <location>
        <begin position="452"/>
        <end position="480"/>
    </location>
</feature>
<feature type="helix" evidence="10">
    <location>
        <begin position="482"/>
        <end position="495"/>
    </location>
</feature>
<feature type="helix" evidence="10">
    <location>
        <begin position="497"/>
        <end position="499"/>
    </location>
</feature>
<feature type="helix" evidence="10">
    <location>
        <begin position="502"/>
        <end position="505"/>
    </location>
</feature>
<feature type="helix" evidence="10">
    <location>
        <begin position="508"/>
        <end position="525"/>
    </location>
</feature>
<feature type="strand" evidence="10">
    <location>
        <begin position="534"/>
        <end position="538"/>
    </location>
</feature>
<reference key="1">
    <citation type="journal article" date="1996" name="J. Bacteriol.">
        <title>A complex four-gene operon containing essential cell division gene pbpB in Bacillus subtilis.</title>
        <authorList>
            <person name="Daniel R.A."/>
            <person name="Williams A.M."/>
            <person name="Errington J."/>
        </authorList>
    </citation>
    <scope>NUCLEOTIDE SEQUENCE [GENOMIC DNA]</scope>
    <source>
        <strain>168</strain>
    </source>
</reference>
<reference key="2">
    <citation type="journal article" date="1997" name="Nature">
        <title>The complete genome sequence of the Gram-positive bacterium Bacillus subtilis.</title>
        <authorList>
            <person name="Kunst F."/>
            <person name="Ogasawara N."/>
            <person name="Moszer I."/>
            <person name="Albertini A.M."/>
            <person name="Alloni G."/>
            <person name="Azevedo V."/>
            <person name="Bertero M.G."/>
            <person name="Bessieres P."/>
            <person name="Bolotin A."/>
            <person name="Borchert S."/>
            <person name="Borriss R."/>
            <person name="Boursier L."/>
            <person name="Brans A."/>
            <person name="Braun M."/>
            <person name="Brignell S.C."/>
            <person name="Bron S."/>
            <person name="Brouillet S."/>
            <person name="Bruschi C.V."/>
            <person name="Caldwell B."/>
            <person name="Capuano V."/>
            <person name="Carter N.M."/>
            <person name="Choi S.-K."/>
            <person name="Codani J.-J."/>
            <person name="Connerton I.F."/>
            <person name="Cummings N.J."/>
            <person name="Daniel R.A."/>
            <person name="Denizot F."/>
            <person name="Devine K.M."/>
            <person name="Duesterhoeft A."/>
            <person name="Ehrlich S.D."/>
            <person name="Emmerson P.T."/>
            <person name="Entian K.-D."/>
            <person name="Errington J."/>
            <person name="Fabret C."/>
            <person name="Ferrari E."/>
            <person name="Foulger D."/>
            <person name="Fritz C."/>
            <person name="Fujita M."/>
            <person name="Fujita Y."/>
            <person name="Fuma S."/>
            <person name="Galizzi A."/>
            <person name="Galleron N."/>
            <person name="Ghim S.-Y."/>
            <person name="Glaser P."/>
            <person name="Goffeau A."/>
            <person name="Golightly E.J."/>
            <person name="Grandi G."/>
            <person name="Guiseppi G."/>
            <person name="Guy B.J."/>
            <person name="Haga K."/>
            <person name="Haiech J."/>
            <person name="Harwood C.R."/>
            <person name="Henaut A."/>
            <person name="Hilbert H."/>
            <person name="Holsappel S."/>
            <person name="Hosono S."/>
            <person name="Hullo M.-F."/>
            <person name="Itaya M."/>
            <person name="Jones L.-M."/>
            <person name="Joris B."/>
            <person name="Karamata D."/>
            <person name="Kasahara Y."/>
            <person name="Klaerr-Blanchard M."/>
            <person name="Klein C."/>
            <person name="Kobayashi Y."/>
            <person name="Koetter P."/>
            <person name="Koningstein G."/>
            <person name="Krogh S."/>
            <person name="Kumano M."/>
            <person name="Kurita K."/>
            <person name="Lapidus A."/>
            <person name="Lardinois S."/>
            <person name="Lauber J."/>
            <person name="Lazarevic V."/>
            <person name="Lee S.-M."/>
            <person name="Levine A."/>
            <person name="Liu H."/>
            <person name="Masuda S."/>
            <person name="Mauel C."/>
            <person name="Medigue C."/>
            <person name="Medina N."/>
            <person name="Mellado R.P."/>
            <person name="Mizuno M."/>
            <person name="Moestl D."/>
            <person name="Nakai S."/>
            <person name="Noback M."/>
            <person name="Noone D."/>
            <person name="O'Reilly M."/>
            <person name="Ogawa K."/>
            <person name="Ogiwara A."/>
            <person name="Oudega B."/>
            <person name="Park S.-H."/>
            <person name="Parro V."/>
            <person name="Pohl T.M."/>
            <person name="Portetelle D."/>
            <person name="Porwollik S."/>
            <person name="Prescott A.M."/>
            <person name="Presecan E."/>
            <person name="Pujic P."/>
            <person name="Purnelle B."/>
            <person name="Rapoport G."/>
            <person name="Rey M."/>
            <person name="Reynolds S."/>
            <person name="Rieger M."/>
            <person name="Rivolta C."/>
            <person name="Rocha E."/>
            <person name="Roche B."/>
            <person name="Rose M."/>
            <person name="Sadaie Y."/>
            <person name="Sato T."/>
            <person name="Scanlan E."/>
            <person name="Schleich S."/>
            <person name="Schroeter R."/>
            <person name="Scoffone F."/>
            <person name="Sekiguchi J."/>
            <person name="Sekowska A."/>
            <person name="Seror S.J."/>
            <person name="Serror P."/>
            <person name="Shin B.-S."/>
            <person name="Soldo B."/>
            <person name="Sorokin A."/>
            <person name="Tacconi E."/>
            <person name="Takagi T."/>
            <person name="Takahashi H."/>
            <person name="Takemaru K."/>
            <person name="Takeuchi M."/>
            <person name="Tamakoshi A."/>
            <person name="Tanaka T."/>
            <person name="Terpstra P."/>
            <person name="Tognoni A."/>
            <person name="Tosato V."/>
            <person name="Uchiyama S."/>
            <person name="Vandenbol M."/>
            <person name="Vannier F."/>
            <person name="Vassarotti A."/>
            <person name="Viari A."/>
            <person name="Wambutt R."/>
            <person name="Wedler E."/>
            <person name="Wedler H."/>
            <person name="Weitzenegger T."/>
            <person name="Winters P."/>
            <person name="Wipat A."/>
            <person name="Yamamoto H."/>
            <person name="Yamane K."/>
            <person name="Yasumoto K."/>
            <person name="Yata K."/>
            <person name="Yoshida K."/>
            <person name="Yoshikawa H.-F."/>
            <person name="Zumstein E."/>
            <person name="Yoshikawa H."/>
            <person name="Danchin A."/>
        </authorList>
    </citation>
    <scope>NUCLEOTIDE SEQUENCE [LARGE SCALE GENOMIC DNA]</scope>
    <source>
        <strain>168</strain>
    </source>
</reference>
<reference key="3">
    <citation type="journal article" date="2009" name="Microbiology">
        <title>From a consortium sequence to a unified sequence: the Bacillus subtilis 168 reference genome a decade later.</title>
        <authorList>
            <person name="Barbe V."/>
            <person name="Cruveiller S."/>
            <person name="Kunst F."/>
            <person name="Lenoble P."/>
            <person name="Meurice G."/>
            <person name="Sekowska A."/>
            <person name="Vallenet D."/>
            <person name="Wang T."/>
            <person name="Moszer I."/>
            <person name="Medigue C."/>
            <person name="Danchin A."/>
        </authorList>
    </citation>
    <scope>SEQUENCE REVISION TO 415</scope>
</reference>
<reference key="4">
    <citation type="submission" date="1997-08" db="EMBL/GenBank/DDBJ databases">
        <title>Bacillus subtilis chromosomal region downstream nprE.</title>
        <authorList>
            <person name="Bertero M."/>
            <person name="Presecan E."/>
            <person name="Glaser P."/>
            <person name="Richou A."/>
            <person name="Danchin A."/>
        </authorList>
    </citation>
    <scope>NUCLEOTIDE SEQUENCE [GENOMIC DNA] OF 1-131</scope>
    <source>
        <strain>168</strain>
    </source>
</reference>
<reference key="5">
    <citation type="journal article" date="2010" name="Proc. Natl. Acad. Sci. U.S.A.">
        <title>Biosynthesis and functions of bacillithiol, a major low-molecular-weight thiol in Bacilli.</title>
        <authorList>
            <person name="Gaballa A."/>
            <person name="Newton G.L."/>
            <person name="Antelmann H."/>
            <person name="Parsonage D."/>
            <person name="Upton H."/>
            <person name="Rawat M."/>
            <person name="Claiborne A."/>
            <person name="Fahey R.C."/>
            <person name="Helmann J.D."/>
        </authorList>
    </citation>
    <scope>DISRUPTION PHENOTYPE</scope>
    <scope>PUTATIVE FUNCTION</scope>
    <source>
        <strain>168</strain>
    </source>
</reference>
<reference key="6">
    <citation type="journal article" date="2015" name="Biochemistry">
        <title>X-ray crystallographic structure of BshC, a unique enzyme involved in bacillithiol biosynthesis.</title>
        <authorList>
            <person name="VanDuinen A.J."/>
            <person name="Winchell K.R."/>
            <person name="Keithly M.E."/>
            <person name="Cook P.D."/>
        </authorList>
    </citation>
    <scope>X-RAY CRYSTALLOGRAPHY (1.77 ANGSTROMS) IN COMPLEX WITH ADP</scope>
    <scope>SUBUNIT</scope>
    <source>
        <strain>168</strain>
    </source>
</reference>
<dbReference type="EC" id="6.-.-.-" evidence="1 7"/>
<dbReference type="EMBL" id="Z68230">
    <property type="protein sequence ID" value="CAA92523.1"/>
    <property type="molecule type" value="Genomic_DNA"/>
</dbReference>
<dbReference type="EMBL" id="AL009126">
    <property type="protein sequence ID" value="CAB13385.2"/>
    <property type="molecule type" value="Genomic_DNA"/>
</dbReference>
<dbReference type="EMBL" id="Z98682">
    <property type="protein sequence ID" value="CAB11365.1"/>
    <property type="molecule type" value="Genomic_DNA"/>
</dbReference>
<dbReference type="PIR" id="G69875">
    <property type="entry name" value="G69875"/>
</dbReference>
<dbReference type="RefSeq" id="NP_389395.2">
    <property type="nucleotide sequence ID" value="NC_000964.3"/>
</dbReference>
<dbReference type="RefSeq" id="WP_003245571.1">
    <property type="nucleotide sequence ID" value="NZ_OZ025638.1"/>
</dbReference>
<dbReference type="PDB" id="4WBD">
    <property type="method" value="X-ray"/>
    <property type="resolution" value="1.77 A"/>
    <property type="chains" value="A=1-539"/>
</dbReference>
<dbReference type="PDBsum" id="4WBD"/>
<dbReference type="SMR" id="P55342"/>
<dbReference type="FunCoup" id="P55342">
    <property type="interactions" value="13"/>
</dbReference>
<dbReference type="IntAct" id="P55342">
    <property type="interactions" value="1"/>
</dbReference>
<dbReference type="STRING" id="224308.BSU15120"/>
<dbReference type="PaxDb" id="224308-BSU15120"/>
<dbReference type="EnsemblBacteria" id="CAB13385">
    <property type="protein sequence ID" value="CAB13385"/>
    <property type="gene ID" value="BSU_15120"/>
</dbReference>
<dbReference type="GeneID" id="939844"/>
<dbReference type="KEGG" id="bsu:BSU15120"/>
<dbReference type="PATRIC" id="fig|224308.179.peg.1648"/>
<dbReference type="eggNOG" id="COG4365">
    <property type="taxonomic scope" value="Bacteria"/>
</dbReference>
<dbReference type="InParanoid" id="P55342"/>
<dbReference type="OrthoDB" id="9765151at2"/>
<dbReference type="PhylomeDB" id="P55342"/>
<dbReference type="BioCyc" id="BSUB:BSU15120-MONOMER"/>
<dbReference type="BioCyc" id="MetaCyc:BSU15120-MONOMER"/>
<dbReference type="EvolutionaryTrace" id="P55342"/>
<dbReference type="Proteomes" id="UP000001570">
    <property type="component" value="Chromosome"/>
</dbReference>
<dbReference type="GO" id="GO:0016874">
    <property type="term" value="F:ligase activity"/>
    <property type="evidence" value="ECO:0007669"/>
    <property type="project" value="UniProtKB-UniRule"/>
</dbReference>
<dbReference type="HAMAP" id="MF_01867">
    <property type="entry name" value="BshC"/>
    <property type="match status" value="1"/>
</dbReference>
<dbReference type="InterPro" id="IPR011199">
    <property type="entry name" value="Bacillithiol_biosynth_BshC"/>
</dbReference>
<dbReference type="InterPro" id="IPR055399">
    <property type="entry name" value="CC_BshC"/>
</dbReference>
<dbReference type="InterPro" id="IPR055398">
    <property type="entry name" value="Rossmann-like_BshC"/>
</dbReference>
<dbReference type="NCBIfam" id="TIGR03998">
    <property type="entry name" value="thiol_BshC"/>
    <property type="match status" value="1"/>
</dbReference>
<dbReference type="Pfam" id="PF24850">
    <property type="entry name" value="CC_BshC"/>
    <property type="match status" value="1"/>
</dbReference>
<dbReference type="Pfam" id="PF10079">
    <property type="entry name" value="Rossmann-like_BshC"/>
    <property type="match status" value="1"/>
</dbReference>
<dbReference type="PIRSF" id="PIRSF012535">
    <property type="entry name" value="UCP012535"/>
    <property type="match status" value="1"/>
</dbReference>
<proteinExistence type="evidence at protein level"/>
<name>BSHC_BACSU</name>
<comment type="function">
    <text evidence="1 8">Involved in bacillithiol (BSH) biosynthesis. May catalyze the last step of the pathway, the addition of cysteine to glucosamine malate (GlcN-Mal) to generate BSH.</text>
</comment>
<comment type="subunit">
    <text evidence="3">Homodimer in solution.</text>
</comment>
<comment type="disruption phenotype">
    <text evidence="2">Mutant accumulates GlcN-Mal and does not produce BSH.</text>
</comment>
<comment type="similarity">
    <text evidence="1 7">Belongs to the BshC family.</text>
</comment>
<keyword id="KW-0002">3D-structure</keyword>
<keyword id="KW-0175">Coiled coil</keyword>
<keyword id="KW-0436">Ligase</keyword>
<keyword id="KW-1185">Reference proteome</keyword>
<evidence type="ECO:0000255" key="1">
    <source>
        <dbReference type="HAMAP-Rule" id="MF_01867"/>
    </source>
</evidence>
<evidence type="ECO:0000269" key="2">
    <source>
    </source>
</evidence>
<evidence type="ECO:0000269" key="3">
    <source>
    </source>
</evidence>
<evidence type="ECO:0000303" key="4">
    <source>
    </source>
</evidence>
<evidence type="ECO:0000303" key="5">
    <source>
    </source>
</evidence>
<evidence type="ECO:0000303" key="6">
    <source>
    </source>
</evidence>
<evidence type="ECO:0000305" key="7"/>
<evidence type="ECO:0000305" key="8">
    <source>
    </source>
</evidence>
<evidence type="ECO:0007744" key="9">
    <source>
        <dbReference type="PDB" id="4WBD"/>
    </source>
</evidence>
<evidence type="ECO:0007829" key="10">
    <source>
        <dbReference type="PDB" id="4WBD"/>
    </source>
</evidence>
<gene>
    <name evidence="1 4" type="primary">bshC</name>
    <name evidence="6" type="synonym">yllA</name>
    <name type="ordered locus">BSU15120</name>
</gene>
<accession>P55342</accession>
<accession>O31722</accession>